<proteinExistence type="evidence at protein level"/>
<organismHost>
    <name type="scientific">Arabidopsis thaliana</name>
    <name type="common">Mouse-ear cress</name>
    <dbReference type="NCBI Taxonomy" id="3702"/>
</organismHost>
<organismHost>
    <name type="scientific">Brassica</name>
    <dbReference type="NCBI Taxonomy" id="3705"/>
</organismHost>
<organismHost>
    <name type="scientific">Raphanus</name>
    <dbReference type="NCBI Taxonomy" id="3725"/>
</organismHost>
<organism>
    <name type="scientific">Cauliflower mosaic virus (strain Strasbourg)</name>
    <name type="common">CaMV</name>
    <dbReference type="NCBI Taxonomy" id="10648"/>
    <lineage>
        <taxon>Viruses</taxon>
        <taxon>Riboviria</taxon>
        <taxon>Pararnavirae</taxon>
        <taxon>Artverviricota</taxon>
        <taxon>Revtraviricetes</taxon>
        <taxon>Ortervirales</taxon>
        <taxon>Caulimoviridae</taxon>
        <taxon>Caulimovirus</taxon>
        <taxon>Caulimovirus tessellobrassicae</taxon>
    </lineage>
</organism>
<comment type="function">
    <text evidence="1 4">Self assembles to form an icosahedral capsid, about 50 nm in diameter, nm, composed of 420 subunits of the viral capsid protein. The capsid encapsulates the genomic dsDNA. Following virus entry into host cell, provides nuclear import of the viral genome. Virus particles do not enter the nucleus, but dock at the nuclear membrane through the interaction with host importins (By similarity).</text>
</comment>
<comment type="subunit">
    <text evidence="1">Interacts (via nuclear localization signal) with host importin alpha.</text>
</comment>
<comment type="subcellular location">
    <subcellularLocation>
        <location evidence="5">Virion</location>
    </subcellularLocation>
    <subcellularLocation>
        <location evidence="5">Host nucleus</location>
    </subcellularLocation>
</comment>
<comment type="similarity">
    <text evidence="5">Belongs to the caulimoviridae capsid protein family.</text>
</comment>
<name>CAPSD_CAMVS</name>
<protein>
    <recommendedName>
        <fullName>Capsid protein</fullName>
        <shortName>CP</shortName>
    </recommendedName>
    <alternativeName>
        <fullName>Coat protein</fullName>
    </alternativeName>
</protein>
<keyword id="KW-0167">Capsid protein</keyword>
<keyword id="KW-1048">Host nucleus</keyword>
<keyword id="KW-0479">Metal-binding</keyword>
<keyword id="KW-1185">Reference proteome</keyword>
<keyword id="KW-1145">T=7 icosahedral capsid protein</keyword>
<keyword id="KW-1163">Viral penetration into host nucleus</keyword>
<keyword id="KW-0946">Virion</keyword>
<keyword id="KW-1160">Virus entry into host cell</keyword>
<keyword id="KW-0862">Zinc</keyword>
<keyword id="KW-0863">Zinc-finger</keyword>
<sequence length="489" mass="56664">MAESILDRTINRFWYNLGEDCLSESQFDLMIRLMEESLDGDQIIDLTSLPSDNLQVEQVMTTTEDSISEEESEFLLAIGETSEEESDSGEEPEFEQVRMDRTGGTEIPKEEDGEGPSRYNERKRKTPEDRYFPTQPKTIPGQKQTSMGMLNIDCQTNRRTLIDDWAAEIGLIVKTNREDYLDPETILLLMEHKTSGIAKELIRNTRWNRTTGDIIEQVIDAMYTMFLGLNYSDNKVAEKIDEQEKAKIRMTKLQLCDICYLEEFTCDYEKNMYKTELADFPGYINQYLSKIPIIGEKALTRFRHEANGTSIYSLGFAAKIVKEELSKICDLSKKQKKLKKFNKKCCSIGEASTEYGCKKTSTKKYHKKRYKKKYKAYKPYKKKKKFRSGKYFKPKEKKGSKQKYCPKGKKDCRCWICNIEGHYANECPNRQSSEKAHILQQAEKLGLQPIEEPYEGVQEVFILEYKEEEEETSTEESDGSSTSEDSDSD</sequence>
<gene>
    <name type="ORF">ORF IV</name>
</gene>
<reference key="1">
    <citation type="journal article" date="1980" name="Cell">
        <title>Nucleotide sequence of cauliflower mosaic virus DNA.</title>
        <authorList>
            <person name="Franck A."/>
            <person name="Guilley H."/>
            <person name="Jonard G."/>
            <person name="Richards K."/>
            <person name="Hirth L."/>
        </authorList>
    </citation>
    <scope>NUCLEOTIDE SEQUENCE [GENOMIC DNA]</scope>
</reference>
<reference key="2">
    <citation type="journal article" date="2002" name="J. Gen. Virol.">
        <title>Regulated nuclear targeting of cauliflower mosaic virus.</title>
        <authorList>
            <person name="Karsies A."/>
            <person name="Merkle T."/>
            <person name="Szurek B."/>
            <person name="Bonas U."/>
            <person name="Hohn T."/>
            <person name="Leclerc D."/>
        </authorList>
    </citation>
    <scope>FUNCTION</scope>
    <scope>NUCLEAR LOCALIZATION SIGNAL</scope>
    <scope>INTERACTION WITH HOST IMPORTIN ALPHA</scope>
</reference>
<evidence type="ECO:0000250" key="1"/>
<evidence type="ECO:0000255" key="2">
    <source>
        <dbReference type="PROSITE-ProRule" id="PRU00047"/>
    </source>
</evidence>
<evidence type="ECO:0000256" key="3">
    <source>
        <dbReference type="SAM" id="MobiDB-lite"/>
    </source>
</evidence>
<evidence type="ECO:0000269" key="4">
    <source>
    </source>
</evidence>
<evidence type="ECO:0000305" key="5"/>
<dbReference type="EMBL" id="V00141">
    <property type="protein sequence ID" value="CAA23459.1"/>
    <property type="molecule type" value="Genomic_DNA"/>
</dbReference>
<dbReference type="PIR" id="A04153">
    <property type="entry name" value="VCCV"/>
</dbReference>
<dbReference type="RefSeq" id="NP_056727.1">
    <property type="nucleotide sequence ID" value="NC_001497.1"/>
</dbReference>
<dbReference type="KEGG" id="vg:1489541"/>
<dbReference type="Proteomes" id="UP000002501">
    <property type="component" value="Genome"/>
</dbReference>
<dbReference type="GO" id="GO:0043657">
    <property type="term" value="C:host cell"/>
    <property type="evidence" value="ECO:0007669"/>
    <property type="project" value="GOC"/>
</dbReference>
<dbReference type="GO" id="GO:0042025">
    <property type="term" value="C:host cell nucleus"/>
    <property type="evidence" value="ECO:0007669"/>
    <property type="project" value="UniProtKB-SubCell"/>
</dbReference>
<dbReference type="GO" id="GO:0039620">
    <property type="term" value="C:T=7 icosahedral viral capsid"/>
    <property type="evidence" value="ECO:0007669"/>
    <property type="project" value="UniProtKB-KW"/>
</dbReference>
<dbReference type="GO" id="GO:0003676">
    <property type="term" value="F:nucleic acid binding"/>
    <property type="evidence" value="ECO:0007669"/>
    <property type="project" value="InterPro"/>
</dbReference>
<dbReference type="GO" id="GO:0005198">
    <property type="term" value="F:structural molecule activity"/>
    <property type="evidence" value="ECO:0007669"/>
    <property type="project" value="InterPro"/>
</dbReference>
<dbReference type="GO" id="GO:0008270">
    <property type="term" value="F:zinc ion binding"/>
    <property type="evidence" value="ECO:0007669"/>
    <property type="project" value="UniProtKB-KW"/>
</dbReference>
<dbReference type="GO" id="GO:0046718">
    <property type="term" value="P:symbiont entry into host cell"/>
    <property type="evidence" value="ECO:0007669"/>
    <property type="project" value="UniProtKB-KW"/>
</dbReference>
<dbReference type="GO" id="GO:0075732">
    <property type="term" value="P:viral penetration into host nucleus"/>
    <property type="evidence" value="ECO:0007669"/>
    <property type="project" value="UniProtKB-KW"/>
</dbReference>
<dbReference type="InterPro" id="IPR001988">
    <property type="entry name" value="Caulimo_coat"/>
</dbReference>
<dbReference type="InterPro" id="IPR001878">
    <property type="entry name" value="Znf_CCHC"/>
</dbReference>
<dbReference type="InterPro" id="IPR036875">
    <property type="entry name" value="Znf_CCHC_sf"/>
</dbReference>
<dbReference type="Pfam" id="PF22909">
    <property type="entry name" value="Caulimovir_coat_dom"/>
    <property type="match status" value="1"/>
</dbReference>
<dbReference type="PRINTS" id="PR00221">
    <property type="entry name" value="CAULIMOCOAT"/>
</dbReference>
<dbReference type="SMART" id="SM00343">
    <property type="entry name" value="ZnF_C2HC"/>
    <property type="match status" value="1"/>
</dbReference>
<dbReference type="SUPFAM" id="SSF57756">
    <property type="entry name" value="Retrovirus zinc finger-like domains"/>
    <property type="match status" value="1"/>
</dbReference>
<dbReference type="PROSITE" id="PS50158">
    <property type="entry name" value="ZF_CCHC"/>
    <property type="match status" value="1"/>
</dbReference>
<feature type="chain" id="PRO_0000222033" description="Capsid protein">
    <location>
        <begin position="1"/>
        <end position="489"/>
    </location>
</feature>
<feature type="zinc finger region" description="CCHC-type" evidence="2">
    <location>
        <begin position="412"/>
        <end position="429"/>
    </location>
</feature>
<feature type="region of interest" description="Disordered" evidence="3">
    <location>
        <begin position="79"/>
        <end position="144"/>
    </location>
</feature>
<feature type="region of interest" description="Disordered" evidence="3">
    <location>
        <begin position="467"/>
        <end position="489"/>
    </location>
</feature>
<feature type="short sequence motif" description="Nuclear localization signal" evidence="4">
    <location>
        <begin position="122"/>
        <end position="125"/>
    </location>
</feature>
<feature type="compositionally biased region" description="Acidic residues" evidence="3">
    <location>
        <begin position="81"/>
        <end position="94"/>
    </location>
</feature>
<feature type="compositionally biased region" description="Basic and acidic residues" evidence="3">
    <location>
        <begin position="95"/>
        <end position="110"/>
    </location>
</feature>
<feature type="compositionally biased region" description="Polar residues" evidence="3">
    <location>
        <begin position="135"/>
        <end position="144"/>
    </location>
</feature>
<accession>P03542</accession>